<accession>Q9ZVJ3</accession>
<accession>F4ITW9</accession>
<feature type="chain" id="PRO_0000395476" description="65-kDa microtubule-associated protein 5">
    <location>
        <begin position="1"/>
        <end position="550"/>
    </location>
</feature>
<feature type="region of interest" description="Disordered" evidence="3">
    <location>
        <begin position="471"/>
        <end position="531"/>
    </location>
</feature>
<feature type="coiled-coil region" evidence="2">
    <location>
        <begin position="46"/>
        <end position="174"/>
    </location>
</feature>
<feature type="coiled-coil region" evidence="2">
    <location>
        <begin position="288"/>
        <end position="310"/>
    </location>
</feature>
<feature type="compositionally biased region" description="Polar residues" evidence="3">
    <location>
        <begin position="502"/>
        <end position="511"/>
    </location>
</feature>
<feature type="site" description="Microtubule binding" evidence="1">
    <location>
        <position position="401"/>
    </location>
</feature>
<feature type="site" description="Microtubule binding" evidence="1">
    <location>
        <position position="412"/>
    </location>
</feature>
<dbReference type="EMBL" id="AC005499">
    <property type="protein sequence ID" value="AAC67346.1"/>
    <property type="status" value="ALT_SEQ"/>
    <property type="molecule type" value="Genomic_DNA"/>
</dbReference>
<dbReference type="EMBL" id="CP002685">
    <property type="protein sequence ID" value="AEC09577.2"/>
    <property type="molecule type" value="Genomic_DNA"/>
</dbReference>
<dbReference type="PIR" id="E84808">
    <property type="entry name" value="E84808"/>
</dbReference>
<dbReference type="RefSeq" id="NP_001318376.1">
    <property type="nucleotide sequence ID" value="NM_001336724.1"/>
</dbReference>
<dbReference type="SMR" id="Q9ZVJ3"/>
<dbReference type="FunCoup" id="Q9ZVJ3">
    <property type="interactions" value="1981"/>
</dbReference>
<dbReference type="STRING" id="3702.Q9ZVJ3"/>
<dbReference type="iPTMnet" id="Q9ZVJ3"/>
<dbReference type="PaxDb" id="3702-AT2G38720.1"/>
<dbReference type="ProteomicsDB" id="238551"/>
<dbReference type="EnsemblPlants" id="AT2G38720.1">
    <property type="protein sequence ID" value="AT2G38720.1"/>
    <property type="gene ID" value="AT2G38720"/>
</dbReference>
<dbReference type="GeneID" id="818454"/>
<dbReference type="Gramene" id="AT2G38720.1">
    <property type="protein sequence ID" value="AT2G38720.1"/>
    <property type="gene ID" value="AT2G38720"/>
</dbReference>
<dbReference type="KEGG" id="ath:AT2G38720"/>
<dbReference type="Araport" id="AT2G38720"/>
<dbReference type="TAIR" id="AT2G38720">
    <property type="gene designation" value="MAP65-5"/>
</dbReference>
<dbReference type="eggNOG" id="KOG4302">
    <property type="taxonomic scope" value="Eukaryota"/>
</dbReference>
<dbReference type="InParanoid" id="Q9ZVJ3"/>
<dbReference type="OMA" id="WRQVSEI"/>
<dbReference type="PhylomeDB" id="Q9ZVJ3"/>
<dbReference type="CD-CODE" id="33FCD62D">
    <property type="entry name" value="Centrosome"/>
</dbReference>
<dbReference type="PRO" id="PR:Q9ZVJ3"/>
<dbReference type="Proteomes" id="UP000006548">
    <property type="component" value="Chromosome 2"/>
</dbReference>
<dbReference type="ExpressionAtlas" id="Q9ZVJ3">
    <property type="expression patterns" value="baseline and differential"/>
</dbReference>
<dbReference type="GO" id="GO:0005938">
    <property type="term" value="C:cell cortex"/>
    <property type="evidence" value="ECO:0007669"/>
    <property type="project" value="UniProtKB-SubCell"/>
</dbReference>
<dbReference type="GO" id="GO:0005874">
    <property type="term" value="C:microtubule"/>
    <property type="evidence" value="ECO:0007669"/>
    <property type="project" value="UniProtKB-KW"/>
</dbReference>
<dbReference type="GO" id="GO:0005634">
    <property type="term" value="C:nucleus"/>
    <property type="evidence" value="ECO:0007669"/>
    <property type="project" value="UniProtKB-SubCell"/>
</dbReference>
<dbReference type="GO" id="GO:0009524">
    <property type="term" value="C:phragmoplast"/>
    <property type="evidence" value="ECO:0007669"/>
    <property type="project" value="UniProtKB-SubCell"/>
</dbReference>
<dbReference type="GO" id="GO:0009506">
    <property type="term" value="C:plasmodesma"/>
    <property type="evidence" value="ECO:0007669"/>
    <property type="project" value="UniProtKB-SubCell"/>
</dbReference>
<dbReference type="GO" id="GO:0005819">
    <property type="term" value="C:spindle"/>
    <property type="evidence" value="ECO:0007669"/>
    <property type="project" value="UniProtKB-SubCell"/>
</dbReference>
<dbReference type="GO" id="GO:0008017">
    <property type="term" value="F:microtubule binding"/>
    <property type="evidence" value="ECO:0007669"/>
    <property type="project" value="InterPro"/>
</dbReference>
<dbReference type="GO" id="GO:0051301">
    <property type="term" value="P:cell division"/>
    <property type="evidence" value="ECO:0007669"/>
    <property type="project" value="UniProtKB-KW"/>
</dbReference>
<dbReference type="GO" id="GO:0000226">
    <property type="term" value="P:microtubule cytoskeleton organization"/>
    <property type="evidence" value="ECO:0007669"/>
    <property type="project" value="InterPro"/>
</dbReference>
<dbReference type="Gene3D" id="1.20.58.1520">
    <property type="match status" value="1"/>
</dbReference>
<dbReference type="InterPro" id="IPR007145">
    <property type="entry name" value="MAP65_Ase1_PRC1"/>
</dbReference>
<dbReference type="PANTHER" id="PTHR19321:SF4">
    <property type="entry name" value="65-KDA MICROTUBULE-ASSOCIATED PROTEIN 5"/>
    <property type="match status" value="1"/>
</dbReference>
<dbReference type="PANTHER" id="PTHR19321">
    <property type="entry name" value="PROTEIN REGULATOR OF CYTOKINESIS 1 PRC1-RELATED"/>
    <property type="match status" value="1"/>
</dbReference>
<dbReference type="Pfam" id="PF03999">
    <property type="entry name" value="MAP65_ASE1"/>
    <property type="match status" value="1"/>
</dbReference>
<sequence>MSPSSTTTCTSLLEELQMIWDEIGESYNERDKMLLELEQECLDIYNKKVEKTRKFRAELQRSLAQAEAEIASLMSALGEKVSFAKKEGSLKEQISSVKPVLEDLLMKKDRRRKELSETLNQIAEITSNIAGNDYTVSSGSEVDESDLTQRKLDELRADLQDLRNEKAVRLQKVNSYISAVHELSEILSFDFSKALNSVHSSLTEFSKTHSKSISNDTLARFTELVKSLKAEKHERLLKLQGLGRSMQELWNLMETPMDERRRFDHCSSLLSSLPDDALKKGCLSLDIIREAEDEVRRLNSLKSSKMKELVFKRQCELEEICRGNHMDINSDAARKSLVELIESGDGDLSDILASIDGQIEKAREEALSRKEILDKVDKWRHAKEEETWLDDYEKDENRFSAVRGAHKNLKRAEKARSLISKIPAMVDVLTTKVKAWEKERGVPFLCDKQPLLQTLEDDIVIRAQREEEKRQFREQKRLQGQLATEKEAKYGSKSAKKKPLGQSLNTDNVTKTPIGRRIGNTPGRSVTSGGKDYRGNAVIPLNYVALQKDD</sequence>
<name>MA655_ARATH</name>
<protein>
    <recommendedName>
        <fullName>65-kDa microtubule-associated protein 5</fullName>
        <shortName>AtMAP65-5</shortName>
    </recommendedName>
</protein>
<gene>
    <name type="primary">MAP65-5</name>
    <name type="ordered locus">At2g38720</name>
    <name type="ORF">T6A23.8</name>
</gene>
<reference key="1">
    <citation type="journal article" date="1999" name="Nature">
        <title>Sequence and analysis of chromosome 2 of the plant Arabidopsis thaliana.</title>
        <authorList>
            <person name="Lin X."/>
            <person name="Kaul S."/>
            <person name="Rounsley S.D."/>
            <person name="Shea T.P."/>
            <person name="Benito M.-I."/>
            <person name="Town C.D."/>
            <person name="Fujii C.Y."/>
            <person name="Mason T.M."/>
            <person name="Bowman C.L."/>
            <person name="Barnstead M.E."/>
            <person name="Feldblyum T.V."/>
            <person name="Buell C.R."/>
            <person name="Ketchum K.A."/>
            <person name="Lee J.J."/>
            <person name="Ronning C.M."/>
            <person name="Koo H.L."/>
            <person name="Moffat K.S."/>
            <person name="Cronin L.A."/>
            <person name="Shen M."/>
            <person name="Pai G."/>
            <person name="Van Aken S."/>
            <person name="Umayam L."/>
            <person name="Tallon L.J."/>
            <person name="Gill J.E."/>
            <person name="Adams M.D."/>
            <person name="Carrera A.J."/>
            <person name="Creasy T.H."/>
            <person name="Goodman H.M."/>
            <person name="Somerville C.R."/>
            <person name="Copenhaver G.P."/>
            <person name="Preuss D."/>
            <person name="Nierman W.C."/>
            <person name="White O."/>
            <person name="Eisen J.A."/>
            <person name="Salzberg S.L."/>
            <person name="Fraser C.M."/>
            <person name="Venter J.C."/>
        </authorList>
    </citation>
    <scope>NUCLEOTIDE SEQUENCE [LARGE SCALE GENOMIC DNA]</scope>
    <source>
        <strain>cv. Columbia</strain>
    </source>
</reference>
<reference key="2">
    <citation type="journal article" date="2017" name="Plant J.">
        <title>Araport11: a complete reannotation of the Arabidopsis thaliana reference genome.</title>
        <authorList>
            <person name="Cheng C.Y."/>
            <person name="Krishnakumar V."/>
            <person name="Chan A.P."/>
            <person name="Thibaud-Nissen F."/>
            <person name="Schobel S."/>
            <person name="Town C.D."/>
        </authorList>
    </citation>
    <scope>GENOME REANNOTATION</scope>
    <source>
        <strain>cv. Columbia</strain>
    </source>
</reference>
<reference key="3">
    <citation type="journal article" date="2002" name="Plant Mol. Biol.">
        <title>The plant cytoskeleton: recent advances in the study of the plant microtubule-associated proteins MAP-65, MAP-190 and the Xenopus MAP215-like protein, MOR1.</title>
        <authorList>
            <person name="Hussey P.J."/>
            <person name="Hawkins T.J."/>
            <person name="Igarashi H."/>
            <person name="Kaloriti D."/>
            <person name="Smertenko A."/>
        </authorList>
    </citation>
    <scope>GENE FAMILY</scope>
    <scope>NOMENCLATURE</scope>
</reference>
<reference key="4">
    <citation type="journal article" date="2004" name="Plant J.">
        <title>Molecular dissection of plant cytokinesis and phragmoplast structure: a survey of GFP-tagged proteins.</title>
        <authorList>
            <person name="Van Damme D."/>
            <person name="Bouget F.-Y."/>
            <person name="Van Poucke K."/>
            <person name="Inze D."/>
            <person name="Geelen D."/>
        </authorList>
    </citation>
    <scope>INTERACTION WITH MICROTUBULES</scope>
    <scope>SUBCELLULAR LOCATION</scope>
</reference>
<reference key="5">
    <citation type="journal article" date="2004" name="Plant Physiol.">
        <title>In vivo dynamics and differential microtubule-binding activities of MAP65 proteins.</title>
        <authorList>
            <person name="Van Damme D."/>
            <person name="Van Poucke K."/>
            <person name="Boutant E."/>
            <person name="Ritzenthaler C."/>
            <person name="Inze D."/>
            <person name="Geelen D."/>
        </authorList>
    </citation>
    <scope>FUNCTION</scope>
    <scope>SUBUNIT</scope>
    <scope>SUBCELLULAR LOCATION</scope>
    <scope>INDUCTION</scope>
</reference>
<reference key="6">
    <citation type="journal article" date="2008" name="Mol. Biol. Cell">
        <title>Two microtubule-associated proteins of Arabidopsis MAP65s promote antiparallel microtubule bundling.</title>
        <authorList>
            <person name="Gaillard J."/>
            <person name="Neumann E."/>
            <person name="Van Damme D."/>
            <person name="Stoppin-Mellet V."/>
            <person name="Ebel C."/>
            <person name="Barbier E."/>
            <person name="Geelen D."/>
            <person name="Vantard M."/>
        </authorList>
    </citation>
    <scope>FUNCTION</scope>
    <scope>SUBCELLULAR LOCATION</scope>
    <scope>SUBUNIT</scope>
</reference>
<reference key="7">
    <citation type="journal article" date="2008" name="Plant Cell">
        <title>The C-terminal variable region specifies the dynamic properties of Arabidopsis microtubule-associated protein MAP65 isotypes.</title>
        <authorList>
            <person name="Smertenko A.P."/>
            <person name="Kaloriti D."/>
            <person name="Chang H.-Y."/>
            <person name="Fiserova J."/>
            <person name="Opatrny Z."/>
            <person name="Hussey P.J."/>
        </authorList>
    </citation>
    <scope>SUBCELLULAR LOCATION</scope>
</reference>
<organism>
    <name type="scientific">Arabidopsis thaliana</name>
    <name type="common">Mouse-ear cress</name>
    <dbReference type="NCBI Taxonomy" id="3702"/>
    <lineage>
        <taxon>Eukaryota</taxon>
        <taxon>Viridiplantae</taxon>
        <taxon>Streptophyta</taxon>
        <taxon>Embryophyta</taxon>
        <taxon>Tracheophyta</taxon>
        <taxon>Spermatophyta</taxon>
        <taxon>Magnoliopsida</taxon>
        <taxon>eudicotyledons</taxon>
        <taxon>Gunneridae</taxon>
        <taxon>Pentapetalae</taxon>
        <taxon>rosids</taxon>
        <taxon>malvids</taxon>
        <taxon>Brassicales</taxon>
        <taxon>Brassicaceae</taxon>
        <taxon>Camelineae</taxon>
        <taxon>Arabidopsis</taxon>
    </lineage>
</organism>
<evidence type="ECO:0000250" key="1"/>
<evidence type="ECO:0000255" key="2"/>
<evidence type="ECO:0000256" key="3">
    <source>
        <dbReference type="SAM" id="MobiDB-lite"/>
    </source>
</evidence>
<evidence type="ECO:0000269" key="4">
    <source>
    </source>
</evidence>
<evidence type="ECO:0000269" key="5">
    <source>
    </source>
</evidence>
<evidence type="ECO:0000305" key="6"/>
<comment type="function">
    <text evidence="4 5">Microtubule-associated protein that bundle and stabilize adjacent microtubules (MT) of the cell cortex. Confers MT resistance to the drug oryzalin. Promotes the formation of a planar network of antiparallel microtubules.</text>
</comment>
<comment type="subunit">
    <text evidence="1 4 5">Forms a dimer (By similarity). Binds to MT, mostly with coaligned MT, both between parallel or antiparallel, forming thick bundles. Bundles polymerized MT via the formation of 25-nm crossbridges with cortical MT.</text>
</comment>
<comment type="subcellular location">
    <subcellularLocation>
        <location>Nucleus</location>
    </subcellularLocation>
    <subcellularLocation>
        <location evidence="1">Cytoplasm</location>
    </subcellularLocation>
    <subcellularLocation>
        <location>Cytoplasm</location>
        <location>Cytoskeleton</location>
        <location>Spindle</location>
    </subcellularLocation>
    <subcellularLocation>
        <location>Cytoplasm</location>
        <location>Cytoskeleton</location>
        <location>Phragmoplast</location>
    </subcellularLocation>
    <subcellularLocation>
        <location>Cytoplasm</location>
        <location>Cell cortex</location>
    </subcellularLocation>
    <subcellularLocation>
        <location>Cell junction</location>
        <location>Plasmodesma</location>
    </subcellularLocation>
    <text>Present in MT cortical arrays. Binds the preprophase band and the prophase spindle microtubule during prophase. Binds MT during anaphase. Also associates with phragmoplast; binds MT of young emerging phragmoplasts but don't binds along MT when the disk-shaped phragmoplasts transform into a ring-shaped, centrifugally expanding structure. At this time, accumulates in the cell plate and associates with the surface of the separated nuclei. Later traverses the newly formed cross wall, probably in association with plasmodesma.</text>
</comment>
<comment type="induction">
    <text evidence="4">Expressed throughout the cell cycle.</text>
</comment>
<comment type="similarity">
    <text evidence="6">Belongs to the MAP65/ASE1 family.</text>
</comment>
<comment type="sequence caution" evidence="6">
    <conflict type="erroneous gene model prediction">
        <sequence resource="EMBL-CDS" id="AAC67346"/>
    </conflict>
</comment>
<proteinExistence type="evidence at protein level"/>
<keyword id="KW-0131">Cell cycle</keyword>
<keyword id="KW-0132">Cell division</keyword>
<keyword id="KW-0965">Cell junction</keyword>
<keyword id="KW-0175">Coiled coil</keyword>
<keyword id="KW-0963">Cytoplasm</keyword>
<keyword id="KW-0206">Cytoskeleton</keyword>
<keyword id="KW-0493">Microtubule</keyword>
<keyword id="KW-0498">Mitosis</keyword>
<keyword id="KW-0539">Nucleus</keyword>
<keyword id="KW-1185">Reference proteome</keyword>